<sequence>MSKMDKLAKFEKFDLFFAAIACICGILKVMEMGKEGYPTLGTVSKNGMAVLAVLVALGFLLKYADQMCRRITSHSFSEKGGFLNPCVILSVIEFFMMLICIKAMLFYPAEIPGVDDSSQMEPPISSKFGLFGAIFMPYIFAECIRLLLANKNSRRDRVILGILVLGCLAMAGLAYLEYKGKGNFISAGILGVGLSMLLSRLALVDEDEEDTLLDDSAEGGNVWMYLAMFASFTLVLILLARSHRILFDNLSFLDSLKSFTFLGRKVSQMASEDPPKDPLPRQEGGGGDTIA</sequence>
<gene>
    <name type="ordered locus">ECU08_0540</name>
</gene>
<keyword id="KW-0325">Glycoprotein</keyword>
<keyword id="KW-0472">Membrane</keyword>
<keyword id="KW-1185">Reference proteome</keyword>
<keyword id="KW-0812">Transmembrane</keyword>
<keyword id="KW-1133">Transmembrane helix</keyword>
<name>Y854_ENCCU</name>
<feature type="chain" id="PRO_0000383037" description="Uncharacterized membrane protein ECU08_0540">
    <location>
        <begin position="1"/>
        <end position="291"/>
    </location>
</feature>
<feature type="transmembrane region" description="Helical" evidence="1">
    <location>
        <begin position="13"/>
        <end position="33"/>
    </location>
</feature>
<feature type="transmembrane region" description="Helical" evidence="1">
    <location>
        <begin position="40"/>
        <end position="60"/>
    </location>
</feature>
<feature type="transmembrane region" description="Helical" evidence="1">
    <location>
        <begin position="81"/>
        <end position="101"/>
    </location>
</feature>
<feature type="transmembrane region" description="Helical" evidence="1">
    <location>
        <begin position="128"/>
        <end position="148"/>
    </location>
</feature>
<feature type="transmembrane region" description="Helical" evidence="1">
    <location>
        <begin position="158"/>
        <end position="178"/>
    </location>
</feature>
<feature type="transmembrane region" description="Helical" evidence="1">
    <location>
        <begin position="220"/>
        <end position="240"/>
    </location>
</feature>
<feature type="region of interest" description="Disordered" evidence="2">
    <location>
        <begin position="269"/>
        <end position="291"/>
    </location>
</feature>
<feature type="glycosylation site" description="N-linked (GlcNAc...) asparagine" evidence="1">
    <location>
        <position position="249"/>
    </location>
</feature>
<comment type="subcellular location">
    <subcellularLocation>
        <location evidence="4">Membrane</location>
        <topology evidence="4">Multi-pass membrane protein</topology>
    </subcellularLocation>
</comment>
<comment type="developmental stage">
    <text evidence="3">Expressed in late sporogonial stages.</text>
</comment>
<organism>
    <name type="scientific">Encephalitozoon cuniculi (strain GB-M1)</name>
    <name type="common">Microsporidian parasite</name>
    <dbReference type="NCBI Taxonomy" id="284813"/>
    <lineage>
        <taxon>Eukaryota</taxon>
        <taxon>Fungi</taxon>
        <taxon>Fungi incertae sedis</taxon>
        <taxon>Microsporidia</taxon>
        <taxon>Unikaryonidae</taxon>
        <taxon>Encephalitozoon</taxon>
    </lineage>
</organism>
<protein>
    <recommendedName>
        <fullName>Uncharacterized membrane protein ECU08_0540</fullName>
    </recommendedName>
</protein>
<dbReference type="EMBL" id="AL590448">
    <property type="protein sequence ID" value="CAD26359.1"/>
    <property type="molecule type" value="Genomic_DNA"/>
</dbReference>
<dbReference type="RefSeq" id="NP_597183.1">
    <property type="nucleotide sequence ID" value="NM_001041792.1"/>
</dbReference>
<dbReference type="GeneID" id="859605"/>
<dbReference type="KEGG" id="ecu:ECU08_0540"/>
<dbReference type="VEuPathDB" id="MicrosporidiaDB:ECU08_0540"/>
<dbReference type="HOGENOM" id="CLU_871627_0_0_1"/>
<dbReference type="InParanoid" id="Q8SUS0"/>
<dbReference type="OrthoDB" id="2195567at2759"/>
<dbReference type="Proteomes" id="UP000000819">
    <property type="component" value="Chromosome VIII"/>
</dbReference>
<dbReference type="GO" id="GO:0016020">
    <property type="term" value="C:membrane"/>
    <property type="evidence" value="ECO:0007669"/>
    <property type="project" value="UniProtKB-SubCell"/>
</dbReference>
<evidence type="ECO:0000255" key="1"/>
<evidence type="ECO:0000256" key="2">
    <source>
        <dbReference type="SAM" id="MobiDB-lite"/>
    </source>
</evidence>
<evidence type="ECO:0000269" key="3">
    <source>
    </source>
</evidence>
<evidence type="ECO:0000305" key="4"/>
<proteinExistence type="evidence at protein level"/>
<reference key="1">
    <citation type="journal article" date="2001" name="Nature">
        <title>Genome sequence and gene compaction of the eukaryote parasite Encephalitozoon cuniculi.</title>
        <authorList>
            <person name="Katinka M.D."/>
            <person name="Duprat S."/>
            <person name="Cornillot E."/>
            <person name="Metenier G."/>
            <person name="Thomarat F."/>
            <person name="Prensier G."/>
            <person name="Barbe V."/>
            <person name="Peyretaillade E."/>
            <person name="Brottier P."/>
            <person name="Wincker P."/>
            <person name="Delbac F."/>
            <person name="El Alaoui H."/>
            <person name="Peyret P."/>
            <person name="Saurin W."/>
            <person name="Gouy M."/>
            <person name="Weissenbach J."/>
            <person name="Vivares C.P."/>
        </authorList>
    </citation>
    <scope>NUCLEOTIDE SEQUENCE [LARGE SCALE GENOMIC DNA]</scope>
    <source>
        <strain>GB-M1</strain>
    </source>
</reference>
<reference key="2">
    <citation type="journal article" date="2006" name="Proteomics">
        <title>Proteomic analysis of the eukaryotic parasite Encephalitozoon cuniculi (microsporidia): a reference map for proteins expressed in late sporogonial stages.</title>
        <authorList>
            <person name="Brosson D."/>
            <person name="Kuhn L."/>
            <person name="Delbac F."/>
            <person name="Garin J."/>
            <person name="Vivares C.P."/>
            <person name="Texier C."/>
        </authorList>
    </citation>
    <scope>IDENTIFICATION BY MASS SPECTROMETRY [LARGE SCALE ANALYSIS]</scope>
    <scope>DEVELOPMENTAL STAGE</scope>
    <scope>SUBCELLULAR LOCATION</scope>
</reference>
<accession>Q8SUS0</accession>